<proteinExistence type="evidence at protein level"/>
<gene>
    <name type="primary">ZNF689</name>
</gene>
<protein>
    <recommendedName>
        <fullName>Zinc finger protein 689</fullName>
    </recommendedName>
</protein>
<name>ZN689_HUMAN</name>
<accession>Q96CS4</accession>
<accession>Q658J5</accession>
<feature type="chain" id="PRO_0000234008" description="Zinc finger protein 689">
    <location>
        <begin position="1"/>
        <end position="500"/>
    </location>
</feature>
<feature type="domain" description="KRAB" evidence="2">
    <location>
        <begin position="29"/>
        <end position="100"/>
    </location>
</feature>
<feature type="zinc finger region" description="C2H2-type 1; degenerate" evidence="1">
    <location>
        <begin position="149"/>
        <end position="171"/>
    </location>
</feature>
<feature type="zinc finger region" description="C2H2-type 2" evidence="1">
    <location>
        <begin position="177"/>
        <end position="199"/>
    </location>
</feature>
<feature type="zinc finger region" description="C2H2-type 3" evidence="1">
    <location>
        <begin position="205"/>
        <end position="227"/>
    </location>
</feature>
<feature type="zinc finger region" description="C2H2-type 4" evidence="1">
    <location>
        <begin position="233"/>
        <end position="255"/>
    </location>
</feature>
<feature type="zinc finger region" description="C2H2-type 5" evidence="1">
    <location>
        <begin position="261"/>
        <end position="283"/>
    </location>
</feature>
<feature type="zinc finger region" description="C2H2-type 6" evidence="1">
    <location>
        <begin position="289"/>
        <end position="311"/>
    </location>
</feature>
<feature type="zinc finger region" description="C2H2-type 7" evidence="1">
    <location>
        <begin position="317"/>
        <end position="339"/>
    </location>
</feature>
<feature type="zinc finger region" description="C2H2-type 8" evidence="1">
    <location>
        <begin position="345"/>
        <end position="367"/>
    </location>
</feature>
<feature type="zinc finger region" description="C2H2-type 9" evidence="1">
    <location>
        <begin position="373"/>
        <end position="395"/>
    </location>
</feature>
<feature type="zinc finger region" description="C2H2-type 10" evidence="1">
    <location>
        <begin position="401"/>
        <end position="423"/>
    </location>
</feature>
<feature type="zinc finger region" description="C2H2-type 11" evidence="1">
    <location>
        <begin position="429"/>
        <end position="451"/>
    </location>
</feature>
<feature type="zinc finger region" description="C2H2-type 12; degenerate" evidence="1">
    <location>
        <begin position="457"/>
        <end position="477"/>
    </location>
</feature>
<feature type="region of interest" description="Disordered" evidence="3">
    <location>
        <begin position="1"/>
        <end position="25"/>
    </location>
</feature>
<feature type="region of interest" description="Disordered" evidence="3">
    <location>
        <begin position="90"/>
        <end position="146"/>
    </location>
</feature>
<feature type="compositionally biased region" description="Basic and acidic residues" evidence="3">
    <location>
        <begin position="113"/>
        <end position="127"/>
    </location>
</feature>
<feature type="compositionally biased region" description="Basic residues" evidence="3">
    <location>
        <begin position="128"/>
        <end position="137"/>
    </location>
</feature>
<feature type="cross-link" description="Glycyl lysine isopeptide (Lys-Gly) (interchain with G-Cter in SUMO2)" evidence="5">
    <location>
        <position position="455"/>
    </location>
</feature>
<evidence type="ECO:0000255" key="1">
    <source>
        <dbReference type="PROSITE-ProRule" id="PRU00042"/>
    </source>
</evidence>
<evidence type="ECO:0000255" key="2">
    <source>
        <dbReference type="PROSITE-ProRule" id="PRU00119"/>
    </source>
</evidence>
<evidence type="ECO:0000256" key="3">
    <source>
        <dbReference type="SAM" id="MobiDB-lite"/>
    </source>
</evidence>
<evidence type="ECO:0000305" key="4"/>
<evidence type="ECO:0007744" key="5">
    <source>
    </source>
</evidence>
<sequence>MAPPSAPLPAQGPGKARPSRKRGRRPRALKFVDVAVYFSPEEWGCLRPAQRALYRDVMRETYGHLGALGCAGPKPALISWLERNTDDWEPAALDPQEYPRGLTVQRKSRTRKKNGEKEVFPPKEAPRKGKRGRRPSKPRLIPRQTSGGPICPDCGCTFPDHQALESHKCAQNLKKPYPCPDCGRRFSYPSLLVSHRRAHSGECPYVCDQCGKRFSQRKNLSQHQVIHTGEKPYHCPDCGRCFRRSRSLANHRTTHTGEKPHQCPSCGRRFAYPSLLAIHQRTHTGEKPYTCLECNRRFRQRTALVIHQRIHTGEKPYPCPDCERRFSSSSRLVSHRRVHSGERPYACEHCEARFSQRSTLLQHQLLHTGEKPYPCPDCGRAFRRSGSLAIHRSTHTEEKLHACDDCGRRFAYPSLLASHRRVHSGERPYACDLCSKRFAQWSHLAQHQLLHTGEKPFPCLECGRCFRQRWSLAVHKCSPKAPNCSPRSAIGGSSQRGNAH</sequence>
<dbReference type="EMBL" id="AK074896">
    <property type="protein sequence ID" value="BAC11275.1"/>
    <property type="molecule type" value="mRNA"/>
</dbReference>
<dbReference type="EMBL" id="BC014000">
    <property type="protein sequence ID" value="AAH14000.1"/>
    <property type="molecule type" value="mRNA"/>
</dbReference>
<dbReference type="EMBL" id="AL834299">
    <property type="protein sequence ID" value="CAH56363.1"/>
    <property type="molecule type" value="mRNA"/>
</dbReference>
<dbReference type="CCDS" id="CCDS10686.1"/>
<dbReference type="RefSeq" id="NP_612456.1">
    <property type="nucleotide sequence ID" value="NM_138447.3"/>
</dbReference>
<dbReference type="SMR" id="Q96CS4"/>
<dbReference type="BioGRID" id="125436">
    <property type="interactions" value="100"/>
</dbReference>
<dbReference type="FunCoup" id="Q96CS4">
    <property type="interactions" value="410"/>
</dbReference>
<dbReference type="IntAct" id="Q96CS4">
    <property type="interactions" value="67"/>
</dbReference>
<dbReference type="STRING" id="9606.ENSP00000287461"/>
<dbReference type="GlyGen" id="Q96CS4">
    <property type="glycosylation" value="1 site, 1 O-linked glycan (1 site)"/>
</dbReference>
<dbReference type="iPTMnet" id="Q96CS4"/>
<dbReference type="PhosphoSitePlus" id="Q96CS4"/>
<dbReference type="BioMuta" id="ZNF689"/>
<dbReference type="DMDM" id="74760770"/>
<dbReference type="jPOST" id="Q96CS4"/>
<dbReference type="MassIVE" id="Q96CS4"/>
<dbReference type="PaxDb" id="9606-ENSP00000287461"/>
<dbReference type="PeptideAtlas" id="Q96CS4"/>
<dbReference type="ProteomicsDB" id="76215"/>
<dbReference type="Pumba" id="Q96CS4"/>
<dbReference type="Antibodypedia" id="27365">
    <property type="antibodies" value="71 antibodies from 18 providers"/>
</dbReference>
<dbReference type="DNASU" id="115509"/>
<dbReference type="Ensembl" id="ENST00000287461.8">
    <property type="protein sequence ID" value="ENSP00000287461.3"/>
    <property type="gene ID" value="ENSG00000156853.13"/>
</dbReference>
<dbReference type="GeneID" id="115509"/>
<dbReference type="KEGG" id="hsa:115509"/>
<dbReference type="MANE-Select" id="ENST00000287461.8">
    <property type="protein sequence ID" value="ENSP00000287461.3"/>
    <property type="RefSeq nucleotide sequence ID" value="NM_138447.3"/>
    <property type="RefSeq protein sequence ID" value="NP_612456.1"/>
</dbReference>
<dbReference type="UCSC" id="uc002dyx.5">
    <property type="organism name" value="human"/>
</dbReference>
<dbReference type="AGR" id="HGNC:25173"/>
<dbReference type="CTD" id="115509"/>
<dbReference type="DisGeNET" id="115509"/>
<dbReference type="GeneCards" id="ZNF689"/>
<dbReference type="HGNC" id="HGNC:25173">
    <property type="gene designation" value="ZNF689"/>
</dbReference>
<dbReference type="HPA" id="ENSG00000156853">
    <property type="expression patterns" value="Tissue enhanced (testis)"/>
</dbReference>
<dbReference type="MIM" id="618033">
    <property type="type" value="gene"/>
</dbReference>
<dbReference type="neXtProt" id="NX_Q96CS4"/>
<dbReference type="OpenTargets" id="ENSG00000156853"/>
<dbReference type="PharmGKB" id="PA142670488"/>
<dbReference type="VEuPathDB" id="HostDB:ENSG00000156853"/>
<dbReference type="eggNOG" id="KOG1721">
    <property type="taxonomic scope" value="Eukaryota"/>
</dbReference>
<dbReference type="GeneTree" id="ENSGT00940000162326"/>
<dbReference type="HOGENOM" id="CLU_002678_13_1_1"/>
<dbReference type="InParanoid" id="Q96CS4"/>
<dbReference type="OMA" id="QSHKCAQ"/>
<dbReference type="OrthoDB" id="6077919at2759"/>
<dbReference type="PAN-GO" id="Q96CS4">
    <property type="GO annotations" value="4 GO annotations based on evolutionary models"/>
</dbReference>
<dbReference type="PhylomeDB" id="Q96CS4"/>
<dbReference type="TreeFam" id="TF336948"/>
<dbReference type="PathwayCommons" id="Q96CS4"/>
<dbReference type="Reactome" id="R-HSA-212436">
    <property type="pathway name" value="Generic Transcription Pathway"/>
</dbReference>
<dbReference type="SignaLink" id="Q96CS4"/>
<dbReference type="BioGRID-ORCS" id="115509">
    <property type="hits" value="26 hits in 1178 CRISPR screens"/>
</dbReference>
<dbReference type="ChiTaRS" id="ZNF689">
    <property type="organism name" value="human"/>
</dbReference>
<dbReference type="GenomeRNAi" id="115509"/>
<dbReference type="Pharos" id="Q96CS4">
    <property type="development level" value="Tdark"/>
</dbReference>
<dbReference type="PRO" id="PR:Q96CS4"/>
<dbReference type="Proteomes" id="UP000005640">
    <property type="component" value="Chromosome 16"/>
</dbReference>
<dbReference type="RNAct" id="Q96CS4">
    <property type="molecule type" value="protein"/>
</dbReference>
<dbReference type="Bgee" id="ENSG00000156853">
    <property type="expression patterns" value="Expressed in oocyte and 173 other cell types or tissues"/>
</dbReference>
<dbReference type="GO" id="GO:0005634">
    <property type="term" value="C:nucleus"/>
    <property type="evidence" value="ECO:0000318"/>
    <property type="project" value="GO_Central"/>
</dbReference>
<dbReference type="GO" id="GO:0000981">
    <property type="term" value="F:DNA-binding transcription factor activity, RNA polymerase II-specific"/>
    <property type="evidence" value="ECO:0000318"/>
    <property type="project" value="GO_Central"/>
</dbReference>
<dbReference type="GO" id="GO:0000978">
    <property type="term" value="F:RNA polymerase II cis-regulatory region sequence-specific DNA binding"/>
    <property type="evidence" value="ECO:0000318"/>
    <property type="project" value="GO_Central"/>
</dbReference>
<dbReference type="GO" id="GO:0008270">
    <property type="term" value="F:zinc ion binding"/>
    <property type="evidence" value="ECO:0007669"/>
    <property type="project" value="UniProtKB-KW"/>
</dbReference>
<dbReference type="GO" id="GO:0006357">
    <property type="term" value="P:regulation of transcription by RNA polymerase II"/>
    <property type="evidence" value="ECO:0000318"/>
    <property type="project" value="GO_Central"/>
</dbReference>
<dbReference type="GO" id="GO:0035914">
    <property type="term" value="P:skeletal muscle cell differentiation"/>
    <property type="evidence" value="ECO:0007669"/>
    <property type="project" value="Ensembl"/>
</dbReference>
<dbReference type="CDD" id="cd07765">
    <property type="entry name" value="KRAB_A-box"/>
    <property type="match status" value="1"/>
</dbReference>
<dbReference type="FunFam" id="3.30.160.60:FF:000060">
    <property type="entry name" value="zinc finger protein 436"/>
    <property type="match status" value="1"/>
</dbReference>
<dbReference type="FunFam" id="3.30.160.60:FF:000180">
    <property type="entry name" value="Zinc finger protein 689"/>
    <property type="match status" value="6"/>
</dbReference>
<dbReference type="FunFam" id="3.30.160.60:FF:000070">
    <property type="entry name" value="zinc finger protein 689 isoform X1"/>
    <property type="match status" value="3"/>
</dbReference>
<dbReference type="FunFam" id="3.30.160.60:FF:000710">
    <property type="entry name" value="Zinc finger protein 768"/>
    <property type="match status" value="1"/>
</dbReference>
<dbReference type="Gene3D" id="6.10.140.140">
    <property type="match status" value="1"/>
</dbReference>
<dbReference type="Gene3D" id="3.30.160.60">
    <property type="entry name" value="Classic Zinc Finger"/>
    <property type="match status" value="11"/>
</dbReference>
<dbReference type="InterPro" id="IPR001909">
    <property type="entry name" value="KRAB"/>
</dbReference>
<dbReference type="InterPro" id="IPR036051">
    <property type="entry name" value="KRAB_dom_sf"/>
</dbReference>
<dbReference type="InterPro" id="IPR036236">
    <property type="entry name" value="Znf_C2H2_sf"/>
</dbReference>
<dbReference type="InterPro" id="IPR013087">
    <property type="entry name" value="Znf_C2H2_type"/>
</dbReference>
<dbReference type="PANTHER" id="PTHR24394">
    <property type="entry name" value="ZINC FINGER PROTEIN"/>
    <property type="match status" value="1"/>
</dbReference>
<dbReference type="PANTHER" id="PTHR24394:SF48">
    <property type="entry name" value="ZINC FINGER PROTEIN 771"/>
    <property type="match status" value="1"/>
</dbReference>
<dbReference type="Pfam" id="PF01352">
    <property type="entry name" value="KRAB"/>
    <property type="match status" value="1"/>
</dbReference>
<dbReference type="Pfam" id="PF00096">
    <property type="entry name" value="zf-C2H2"/>
    <property type="match status" value="10"/>
</dbReference>
<dbReference type="SMART" id="SM00349">
    <property type="entry name" value="KRAB"/>
    <property type="match status" value="1"/>
</dbReference>
<dbReference type="SMART" id="SM00355">
    <property type="entry name" value="ZnF_C2H2"/>
    <property type="match status" value="12"/>
</dbReference>
<dbReference type="SUPFAM" id="SSF57667">
    <property type="entry name" value="beta-beta-alpha zinc fingers"/>
    <property type="match status" value="7"/>
</dbReference>
<dbReference type="SUPFAM" id="SSF109640">
    <property type="entry name" value="KRAB domain (Kruppel-associated box)"/>
    <property type="match status" value="1"/>
</dbReference>
<dbReference type="PROSITE" id="PS50805">
    <property type="entry name" value="KRAB"/>
    <property type="match status" value="1"/>
</dbReference>
<dbReference type="PROSITE" id="PS00028">
    <property type="entry name" value="ZINC_FINGER_C2H2_1"/>
    <property type="match status" value="10"/>
</dbReference>
<dbReference type="PROSITE" id="PS50157">
    <property type="entry name" value="ZINC_FINGER_C2H2_2"/>
    <property type="match status" value="11"/>
</dbReference>
<keyword id="KW-0238">DNA-binding</keyword>
<keyword id="KW-1017">Isopeptide bond</keyword>
<keyword id="KW-0479">Metal-binding</keyword>
<keyword id="KW-0539">Nucleus</keyword>
<keyword id="KW-1267">Proteomics identification</keyword>
<keyword id="KW-1185">Reference proteome</keyword>
<keyword id="KW-0677">Repeat</keyword>
<keyword id="KW-0804">Transcription</keyword>
<keyword id="KW-0805">Transcription regulation</keyword>
<keyword id="KW-0832">Ubl conjugation</keyword>
<keyword id="KW-0862">Zinc</keyword>
<keyword id="KW-0863">Zinc-finger</keyword>
<comment type="function">
    <text>May be involved in transcriptional regulation.</text>
</comment>
<comment type="subcellular location">
    <subcellularLocation>
        <location evidence="4">Nucleus</location>
    </subcellularLocation>
</comment>
<comment type="similarity">
    <text evidence="4">Belongs to the krueppel C2H2-type zinc-finger protein family.</text>
</comment>
<reference key="1">
    <citation type="journal article" date="2004" name="Nat. Genet.">
        <title>Complete sequencing and characterization of 21,243 full-length human cDNAs.</title>
        <authorList>
            <person name="Ota T."/>
            <person name="Suzuki Y."/>
            <person name="Nishikawa T."/>
            <person name="Otsuki T."/>
            <person name="Sugiyama T."/>
            <person name="Irie R."/>
            <person name="Wakamatsu A."/>
            <person name="Hayashi K."/>
            <person name="Sato H."/>
            <person name="Nagai K."/>
            <person name="Kimura K."/>
            <person name="Makita H."/>
            <person name="Sekine M."/>
            <person name="Obayashi M."/>
            <person name="Nishi T."/>
            <person name="Shibahara T."/>
            <person name="Tanaka T."/>
            <person name="Ishii S."/>
            <person name="Yamamoto J."/>
            <person name="Saito K."/>
            <person name="Kawai Y."/>
            <person name="Isono Y."/>
            <person name="Nakamura Y."/>
            <person name="Nagahari K."/>
            <person name="Murakami K."/>
            <person name="Yasuda T."/>
            <person name="Iwayanagi T."/>
            <person name="Wagatsuma M."/>
            <person name="Shiratori A."/>
            <person name="Sudo H."/>
            <person name="Hosoiri T."/>
            <person name="Kaku Y."/>
            <person name="Kodaira H."/>
            <person name="Kondo H."/>
            <person name="Sugawara M."/>
            <person name="Takahashi M."/>
            <person name="Kanda K."/>
            <person name="Yokoi T."/>
            <person name="Furuya T."/>
            <person name="Kikkawa E."/>
            <person name="Omura Y."/>
            <person name="Abe K."/>
            <person name="Kamihara K."/>
            <person name="Katsuta N."/>
            <person name="Sato K."/>
            <person name="Tanikawa M."/>
            <person name="Yamazaki M."/>
            <person name="Ninomiya K."/>
            <person name="Ishibashi T."/>
            <person name="Yamashita H."/>
            <person name="Murakawa K."/>
            <person name="Fujimori K."/>
            <person name="Tanai H."/>
            <person name="Kimata M."/>
            <person name="Watanabe M."/>
            <person name="Hiraoka S."/>
            <person name="Chiba Y."/>
            <person name="Ishida S."/>
            <person name="Ono Y."/>
            <person name="Takiguchi S."/>
            <person name="Watanabe S."/>
            <person name="Yosida M."/>
            <person name="Hotuta T."/>
            <person name="Kusano J."/>
            <person name="Kanehori K."/>
            <person name="Takahashi-Fujii A."/>
            <person name="Hara H."/>
            <person name="Tanase T.-O."/>
            <person name="Nomura Y."/>
            <person name="Togiya S."/>
            <person name="Komai F."/>
            <person name="Hara R."/>
            <person name="Takeuchi K."/>
            <person name="Arita M."/>
            <person name="Imose N."/>
            <person name="Musashino K."/>
            <person name="Yuuki H."/>
            <person name="Oshima A."/>
            <person name="Sasaki N."/>
            <person name="Aotsuka S."/>
            <person name="Yoshikawa Y."/>
            <person name="Matsunawa H."/>
            <person name="Ichihara T."/>
            <person name="Shiohata N."/>
            <person name="Sano S."/>
            <person name="Moriya S."/>
            <person name="Momiyama H."/>
            <person name="Satoh N."/>
            <person name="Takami S."/>
            <person name="Terashima Y."/>
            <person name="Suzuki O."/>
            <person name="Nakagawa S."/>
            <person name="Senoh A."/>
            <person name="Mizoguchi H."/>
            <person name="Goto Y."/>
            <person name="Shimizu F."/>
            <person name="Wakebe H."/>
            <person name="Hishigaki H."/>
            <person name="Watanabe T."/>
            <person name="Sugiyama A."/>
            <person name="Takemoto M."/>
            <person name="Kawakami B."/>
            <person name="Yamazaki M."/>
            <person name="Watanabe K."/>
            <person name="Kumagai A."/>
            <person name="Itakura S."/>
            <person name="Fukuzumi Y."/>
            <person name="Fujimori Y."/>
            <person name="Komiyama M."/>
            <person name="Tashiro H."/>
            <person name="Tanigami A."/>
            <person name="Fujiwara T."/>
            <person name="Ono T."/>
            <person name="Yamada K."/>
            <person name="Fujii Y."/>
            <person name="Ozaki K."/>
            <person name="Hirao M."/>
            <person name="Ohmori Y."/>
            <person name="Kawabata A."/>
            <person name="Hikiji T."/>
            <person name="Kobatake N."/>
            <person name="Inagaki H."/>
            <person name="Ikema Y."/>
            <person name="Okamoto S."/>
            <person name="Okitani R."/>
            <person name="Kawakami T."/>
            <person name="Noguchi S."/>
            <person name="Itoh T."/>
            <person name="Shigeta K."/>
            <person name="Senba T."/>
            <person name="Matsumura K."/>
            <person name="Nakajima Y."/>
            <person name="Mizuno T."/>
            <person name="Morinaga M."/>
            <person name="Sasaki M."/>
            <person name="Togashi T."/>
            <person name="Oyama M."/>
            <person name="Hata H."/>
            <person name="Watanabe M."/>
            <person name="Komatsu T."/>
            <person name="Mizushima-Sugano J."/>
            <person name="Satoh T."/>
            <person name="Shirai Y."/>
            <person name="Takahashi Y."/>
            <person name="Nakagawa K."/>
            <person name="Okumura K."/>
            <person name="Nagase T."/>
            <person name="Nomura N."/>
            <person name="Kikuchi H."/>
            <person name="Masuho Y."/>
            <person name="Yamashita R."/>
            <person name="Nakai K."/>
            <person name="Yada T."/>
            <person name="Nakamura Y."/>
            <person name="Ohara O."/>
            <person name="Isogai T."/>
            <person name="Sugano S."/>
        </authorList>
    </citation>
    <scope>NUCLEOTIDE SEQUENCE [LARGE SCALE MRNA]</scope>
    <source>
        <tissue>Teratocarcinoma</tissue>
    </source>
</reference>
<reference key="2">
    <citation type="journal article" date="2004" name="Genome Res.">
        <title>The status, quality, and expansion of the NIH full-length cDNA project: the Mammalian Gene Collection (MGC).</title>
        <authorList>
            <consortium name="The MGC Project Team"/>
        </authorList>
    </citation>
    <scope>NUCLEOTIDE SEQUENCE [LARGE SCALE MRNA]</scope>
    <source>
        <tissue>Lung</tissue>
    </source>
</reference>
<reference key="3">
    <citation type="journal article" date="2007" name="BMC Genomics">
        <title>The full-ORF clone resource of the German cDNA consortium.</title>
        <authorList>
            <person name="Bechtel S."/>
            <person name="Rosenfelder H."/>
            <person name="Duda A."/>
            <person name="Schmidt C.P."/>
            <person name="Ernst U."/>
            <person name="Wellenreuther R."/>
            <person name="Mehrle A."/>
            <person name="Schuster C."/>
            <person name="Bahr A."/>
            <person name="Bloecker H."/>
            <person name="Heubner D."/>
            <person name="Hoerlein A."/>
            <person name="Michel G."/>
            <person name="Wedler H."/>
            <person name="Koehrer K."/>
            <person name="Ottenwaelder B."/>
            <person name="Poustka A."/>
            <person name="Wiemann S."/>
            <person name="Schupp I."/>
        </authorList>
    </citation>
    <scope>NUCLEOTIDE SEQUENCE [LARGE SCALE MRNA] OF 284-500</scope>
    <source>
        <tissue>Melanoma</tissue>
    </source>
</reference>
<reference key="4">
    <citation type="journal article" date="2017" name="Nat. Struct. Mol. Biol.">
        <title>Site-specific mapping of the human SUMO proteome reveals co-modification with phosphorylation.</title>
        <authorList>
            <person name="Hendriks I.A."/>
            <person name="Lyon D."/>
            <person name="Young C."/>
            <person name="Jensen L.J."/>
            <person name="Vertegaal A.C."/>
            <person name="Nielsen M.L."/>
        </authorList>
    </citation>
    <scope>SUMOYLATION [LARGE SCALE ANALYSIS] AT LYS-455</scope>
    <scope>IDENTIFICATION BY MASS SPECTROMETRY [LARGE SCALE ANALYSIS]</scope>
</reference>
<organism>
    <name type="scientific">Homo sapiens</name>
    <name type="common">Human</name>
    <dbReference type="NCBI Taxonomy" id="9606"/>
    <lineage>
        <taxon>Eukaryota</taxon>
        <taxon>Metazoa</taxon>
        <taxon>Chordata</taxon>
        <taxon>Craniata</taxon>
        <taxon>Vertebrata</taxon>
        <taxon>Euteleostomi</taxon>
        <taxon>Mammalia</taxon>
        <taxon>Eutheria</taxon>
        <taxon>Euarchontoglires</taxon>
        <taxon>Primates</taxon>
        <taxon>Haplorrhini</taxon>
        <taxon>Catarrhini</taxon>
        <taxon>Hominidae</taxon>
        <taxon>Homo</taxon>
    </lineage>
</organism>